<gene>
    <name type="primary">Uts2b</name>
    <name type="synonym">Urp</name>
    <name type="synonym">Uts2d</name>
</gene>
<reference key="1">
    <citation type="journal article" date="2003" name="Biochem. Biophys. Res. Commun.">
        <title>Identification of urotensin II-related peptide as the urotensin II-immunoreactive molecule in the rat brain.</title>
        <authorList>
            <person name="Sugo T."/>
            <person name="Murakami Y."/>
            <person name="Shimomura Y."/>
            <person name="Harada M."/>
            <person name="Abe M."/>
            <person name="Ishibashi Y."/>
            <person name="Kitada C."/>
            <person name="Miyajima N."/>
            <person name="Suzuki N."/>
            <person name="Mori M."/>
            <person name="Fujino M."/>
        </authorList>
    </citation>
    <scope>NUCLEOTIDE SEQUENCE [MRNA]</scope>
    <source>
        <tissue>Brain</tissue>
    </source>
</reference>
<reference key="2">
    <citation type="submission" date="2003-06" db="EMBL/GenBank/DDBJ databases">
        <title>Characterization of a novel urotensin II precursor: urotensin II B (U2B).</title>
        <authorList>
            <person name="Nothacker H.-P."/>
            <person name="Civelli O."/>
        </authorList>
    </citation>
    <scope>NUCLEOTIDE SEQUENCE [MRNA]</scope>
</reference>
<dbReference type="EMBL" id="AB116020">
    <property type="protein sequence ID" value="BAC98928.1"/>
    <property type="molecule type" value="mRNA"/>
</dbReference>
<dbReference type="EMBL" id="AY321315">
    <property type="protein sequence ID" value="AAQ83885.1"/>
    <property type="molecule type" value="mRNA"/>
</dbReference>
<dbReference type="CCDS" id="CCDS28091.1"/>
<dbReference type="RefSeq" id="NP_937809.1">
    <property type="nucleotide sequence ID" value="NM_198166.3"/>
</dbReference>
<dbReference type="SMR" id="Q765I1"/>
<dbReference type="FunCoup" id="Q765I1">
    <property type="interactions" value="383"/>
</dbReference>
<dbReference type="STRING" id="10090.ENSMUSP00000070840"/>
<dbReference type="iPTMnet" id="Q765I1"/>
<dbReference type="PhosphoSitePlus" id="Q765I1"/>
<dbReference type="PaxDb" id="10090-ENSMUSP00000070840"/>
<dbReference type="Antibodypedia" id="19374">
    <property type="antibodies" value="118 antibodies from 18 providers"/>
</dbReference>
<dbReference type="DNASU" id="224065"/>
<dbReference type="Ensembl" id="ENSMUST00000070531.8">
    <property type="protein sequence ID" value="ENSMUSP00000070840.8"/>
    <property type="gene ID" value="ENSMUSG00000056423.8"/>
</dbReference>
<dbReference type="GeneID" id="224065"/>
<dbReference type="KEGG" id="mmu:224065"/>
<dbReference type="UCSC" id="uc007yvm.1">
    <property type="organism name" value="mouse"/>
</dbReference>
<dbReference type="AGR" id="MGI:2677064"/>
<dbReference type="CTD" id="257313"/>
<dbReference type="MGI" id="MGI:2677064">
    <property type="gene designation" value="Uts2b"/>
</dbReference>
<dbReference type="VEuPathDB" id="HostDB:ENSMUSG00000056423"/>
<dbReference type="eggNOG" id="ENOG502S3JR">
    <property type="taxonomic scope" value="Eukaryota"/>
</dbReference>
<dbReference type="GeneTree" id="ENSGT00390000003511"/>
<dbReference type="HOGENOM" id="CLU_2060777_0_0_1"/>
<dbReference type="InParanoid" id="Q765I1"/>
<dbReference type="OMA" id="DWIMEAK"/>
<dbReference type="OrthoDB" id="9890208at2759"/>
<dbReference type="PhylomeDB" id="Q765I1"/>
<dbReference type="TreeFam" id="TF338338"/>
<dbReference type="Reactome" id="R-MMU-375276">
    <property type="pathway name" value="Peptide ligand-binding receptors"/>
</dbReference>
<dbReference type="Reactome" id="R-MMU-416476">
    <property type="pathway name" value="G alpha (q) signalling events"/>
</dbReference>
<dbReference type="BioGRID-ORCS" id="224065">
    <property type="hits" value="2 hits in 77 CRISPR screens"/>
</dbReference>
<dbReference type="ChiTaRS" id="Uts2b">
    <property type="organism name" value="mouse"/>
</dbReference>
<dbReference type="PRO" id="PR:Q765I1"/>
<dbReference type="Proteomes" id="UP000000589">
    <property type="component" value="Chromosome 16"/>
</dbReference>
<dbReference type="RNAct" id="Q765I1">
    <property type="molecule type" value="protein"/>
</dbReference>
<dbReference type="Bgee" id="ENSMUSG00000056423">
    <property type="expression patterns" value="Expressed in neural tube and 14 other cell types or tissues"/>
</dbReference>
<dbReference type="ExpressionAtlas" id="Q765I1">
    <property type="expression patterns" value="baseline and differential"/>
</dbReference>
<dbReference type="GO" id="GO:0005576">
    <property type="term" value="C:extracellular region"/>
    <property type="evidence" value="ECO:0007669"/>
    <property type="project" value="UniProtKB-SubCell"/>
</dbReference>
<dbReference type="GO" id="GO:0005179">
    <property type="term" value="F:hormone activity"/>
    <property type="evidence" value="ECO:0007669"/>
    <property type="project" value="UniProtKB-KW"/>
</dbReference>
<dbReference type="GO" id="GO:0097746">
    <property type="term" value="P:blood vessel diameter maintenance"/>
    <property type="evidence" value="ECO:0007669"/>
    <property type="project" value="InterPro"/>
</dbReference>
<dbReference type="GO" id="GO:0008217">
    <property type="term" value="P:regulation of blood pressure"/>
    <property type="evidence" value="ECO:0007669"/>
    <property type="project" value="InterPro"/>
</dbReference>
<dbReference type="InterPro" id="IPR043255">
    <property type="entry name" value="U-IIB"/>
</dbReference>
<dbReference type="InterPro" id="IPR001483">
    <property type="entry name" value="Urotensin_II"/>
</dbReference>
<dbReference type="PANTHER" id="PTHR36876">
    <property type="entry name" value="UROTENSIN-2B"/>
    <property type="match status" value="1"/>
</dbReference>
<dbReference type="PANTHER" id="PTHR36876:SF1">
    <property type="entry name" value="UROTENSIN-2B"/>
    <property type="match status" value="1"/>
</dbReference>
<dbReference type="PROSITE" id="PS00984">
    <property type="entry name" value="UROTENSIN_II"/>
    <property type="match status" value="1"/>
</dbReference>
<proteinExistence type="inferred from homology"/>
<organism>
    <name type="scientific">Mus musculus</name>
    <name type="common">Mouse</name>
    <dbReference type="NCBI Taxonomy" id="10090"/>
    <lineage>
        <taxon>Eukaryota</taxon>
        <taxon>Metazoa</taxon>
        <taxon>Chordata</taxon>
        <taxon>Craniata</taxon>
        <taxon>Vertebrata</taxon>
        <taxon>Euteleostomi</taxon>
        <taxon>Mammalia</taxon>
        <taxon>Eutheria</taxon>
        <taxon>Euarchontoglires</taxon>
        <taxon>Glires</taxon>
        <taxon>Rodentia</taxon>
        <taxon>Myomorpha</taxon>
        <taxon>Muroidea</taxon>
        <taxon>Muridae</taxon>
        <taxon>Murinae</taxon>
        <taxon>Mus</taxon>
        <taxon>Mus</taxon>
    </lineage>
</organism>
<evidence type="ECO:0000250" key="1"/>
<evidence type="ECO:0000255" key="2"/>
<evidence type="ECO:0000305" key="3"/>
<accession>Q765I1</accession>
<sequence>MKVFSTSLWCGLLTLLSVMNLFKSVRGRPHLSSGHELFPAKEHAAQEKLTRNPGLQRPFHAGGDLPSKLEELRQVKKLRDWIMEAKNTGLSNALDNLSSSHTKKRACFWKYCV</sequence>
<keyword id="KW-0165">Cleavage on pair of basic residues</keyword>
<keyword id="KW-1015">Disulfide bond</keyword>
<keyword id="KW-0372">Hormone</keyword>
<keyword id="KW-1185">Reference proteome</keyword>
<keyword id="KW-0964">Secreted</keyword>
<keyword id="KW-0732">Signal</keyword>
<name>UTS2B_MOUSE</name>
<feature type="signal peptide" evidence="2">
    <location>
        <begin position="1"/>
        <end position="27"/>
    </location>
</feature>
<feature type="propeptide" id="PRO_0000036359" evidence="1">
    <location>
        <begin position="28"/>
        <end position="103"/>
    </location>
</feature>
<feature type="peptide" id="PRO_0000036360" description="Urotensin-2B">
    <location>
        <begin position="106"/>
        <end position="113"/>
    </location>
</feature>
<feature type="disulfide bond" evidence="1">
    <location>
        <begin position="107"/>
        <end position="112"/>
    </location>
</feature>
<protein>
    <recommendedName>
        <fullName>Urotensin-2B</fullName>
    </recommendedName>
    <alternativeName>
        <fullName>Urotensin II-related peptide</fullName>
    </alternativeName>
    <alternativeName>
        <fullName>Urotensin IIB</fullName>
        <shortName>U-IIB</shortName>
        <shortName>UIIB</shortName>
    </alternativeName>
    <alternativeName>
        <fullName>Urotensin-2 domain-containing protein</fullName>
    </alternativeName>
</protein>
<comment type="function">
    <text evidence="1">Potent vasoconstrictor.</text>
</comment>
<comment type="subcellular location">
    <subcellularLocation>
        <location evidence="1">Secreted</location>
    </subcellularLocation>
</comment>
<comment type="similarity">
    <text evidence="3">Belongs to the urotensin-2 family.</text>
</comment>